<name>RL4_MYCLE</name>
<keyword id="KW-1185">Reference proteome</keyword>
<keyword id="KW-0687">Ribonucleoprotein</keyword>
<keyword id="KW-0689">Ribosomal protein</keyword>
<keyword id="KW-0694">RNA-binding</keyword>
<keyword id="KW-0699">rRNA-binding</keyword>
<comment type="function">
    <text evidence="1">One of the primary rRNA binding proteins, this protein initially binds near the 5'-end of the 23S rRNA. It is important during the early stages of 50S assembly. It makes multiple contacts with different domains of the 23S rRNA in the assembled 50S subunit and ribosome.</text>
</comment>
<comment type="function">
    <text evidence="1">Forms part of the polypeptide exit tunnel.</text>
</comment>
<comment type="subunit">
    <text evidence="1">Part of the 50S ribosomal subunit.</text>
</comment>
<comment type="similarity">
    <text evidence="1">Belongs to the universal ribosomal protein uL4 family.</text>
</comment>
<gene>
    <name evidence="1" type="primary">rplD</name>
    <name type="ordered locus">ML1862</name>
    <name type="ORF">MLCB2492.03</name>
</gene>
<reference key="1">
    <citation type="journal article" date="2001" name="Nature">
        <title>Massive gene decay in the leprosy bacillus.</title>
        <authorList>
            <person name="Cole S.T."/>
            <person name="Eiglmeier K."/>
            <person name="Parkhill J."/>
            <person name="James K.D."/>
            <person name="Thomson N.R."/>
            <person name="Wheeler P.R."/>
            <person name="Honore N."/>
            <person name="Garnier T."/>
            <person name="Churcher C.M."/>
            <person name="Harris D.E."/>
            <person name="Mungall K.L."/>
            <person name="Basham D."/>
            <person name="Brown D."/>
            <person name="Chillingworth T."/>
            <person name="Connor R."/>
            <person name="Davies R.M."/>
            <person name="Devlin K."/>
            <person name="Duthoy S."/>
            <person name="Feltwell T."/>
            <person name="Fraser A."/>
            <person name="Hamlin N."/>
            <person name="Holroyd S."/>
            <person name="Hornsby T."/>
            <person name="Jagels K."/>
            <person name="Lacroix C."/>
            <person name="Maclean J."/>
            <person name="Moule S."/>
            <person name="Murphy L.D."/>
            <person name="Oliver K."/>
            <person name="Quail M.A."/>
            <person name="Rajandream M.A."/>
            <person name="Rutherford K.M."/>
            <person name="Rutter S."/>
            <person name="Seeger K."/>
            <person name="Simon S."/>
            <person name="Simmonds M."/>
            <person name="Skelton J."/>
            <person name="Squares R."/>
            <person name="Squares S."/>
            <person name="Stevens K."/>
            <person name="Taylor K."/>
            <person name="Whitehead S."/>
            <person name="Woodward J.R."/>
            <person name="Barrell B.G."/>
        </authorList>
    </citation>
    <scope>NUCLEOTIDE SEQUENCE [LARGE SCALE GENOMIC DNA]</scope>
    <source>
        <strain>TN</strain>
    </source>
</reference>
<dbReference type="EMBL" id="Z98756">
    <property type="protein sequence ID" value="CAB11436.1"/>
    <property type="molecule type" value="Genomic_DNA"/>
</dbReference>
<dbReference type="EMBL" id="AL583923">
    <property type="protein sequence ID" value="CAC30816.1"/>
    <property type="molecule type" value="Genomic_DNA"/>
</dbReference>
<dbReference type="PIR" id="T45365">
    <property type="entry name" value="T45365"/>
</dbReference>
<dbReference type="RefSeq" id="NP_302264.1">
    <property type="nucleotide sequence ID" value="NC_002677.1"/>
</dbReference>
<dbReference type="RefSeq" id="WP_010908585.1">
    <property type="nucleotide sequence ID" value="NC_002677.1"/>
</dbReference>
<dbReference type="SMR" id="O32982"/>
<dbReference type="STRING" id="272631.gene:17575710"/>
<dbReference type="KEGG" id="mle:ML1862"/>
<dbReference type="PATRIC" id="fig|272631.5.peg.3523"/>
<dbReference type="Leproma" id="ML1862"/>
<dbReference type="eggNOG" id="COG0088">
    <property type="taxonomic scope" value="Bacteria"/>
</dbReference>
<dbReference type="HOGENOM" id="CLU_041575_5_0_11"/>
<dbReference type="OrthoDB" id="9803201at2"/>
<dbReference type="Proteomes" id="UP000000806">
    <property type="component" value="Chromosome"/>
</dbReference>
<dbReference type="GO" id="GO:1990904">
    <property type="term" value="C:ribonucleoprotein complex"/>
    <property type="evidence" value="ECO:0007669"/>
    <property type="project" value="UniProtKB-KW"/>
</dbReference>
<dbReference type="GO" id="GO:0005840">
    <property type="term" value="C:ribosome"/>
    <property type="evidence" value="ECO:0007669"/>
    <property type="project" value="UniProtKB-KW"/>
</dbReference>
<dbReference type="GO" id="GO:0019843">
    <property type="term" value="F:rRNA binding"/>
    <property type="evidence" value="ECO:0007669"/>
    <property type="project" value="UniProtKB-UniRule"/>
</dbReference>
<dbReference type="GO" id="GO:0003735">
    <property type="term" value="F:structural constituent of ribosome"/>
    <property type="evidence" value="ECO:0007669"/>
    <property type="project" value="InterPro"/>
</dbReference>
<dbReference type="GO" id="GO:0006412">
    <property type="term" value="P:translation"/>
    <property type="evidence" value="ECO:0007669"/>
    <property type="project" value="UniProtKB-UniRule"/>
</dbReference>
<dbReference type="FunFam" id="3.40.1370.10:FF:000004">
    <property type="entry name" value="50S ribosomal protein L4"/>
    <property type="match status" value="1"/>
</dbReference>
<dbReference type="Gene3D" id="3.40.1370.10">
    <property type="match status" value="1"/>
</dbReference>
<dbReference type="HAMAP" id="MF_01328_B">
    <property type="entry name" value="Ribosomal_uL4_B"/>
    <property type="match status" value="1"/>
</dbReference>
<dbReference type="InterPro" id="IPR002136">
    <property type="entry name" value="Ribosomal_uL4"/>
</dbReference>
<dbReference type="InterPro" id="IPR013005">
    <property type="entry name" value="Ribosomal_uL4-like"/>
</dbReference>
<dbReference type="InterPro" id="IPR023574">
    <property type="entry name" value="Ribosomal_uL4_dom_sf"/>
</dbReference>
<dbReference type="NCBIfam" id="TIGR03953">
    <property type="entry name" value="rplD_bact"/>
    <property type="match status" value="1"/>
</dbReference>
<dbReference type="PANTHER" id="PTHR10746">
    <property type="entry name" value="50S RIBOSOMAL PROTEIN L4"/>
    <property type="match status" value="1"/>
</dbReference>
<dbReference type="PANTHER" id="PTHR10746:SF6">
    <property type="entry name" value="LARGE RIBOSOMAL SUBUNIT PROTEIN UL4M"/>
    <property type="match status" value="1"/>
</dbReference>
<dbReference type="Pfam" id="PF00573">
    <property type="entry name" value="Ribosomal_L4"/>
    <property type="match status" value="1"/>
</dbReference>
<dbReference type="SUPFAM" id="SSF52166">
    <property type="entry name" value="Ribosomal protein L4"/>
    <property type="match status" value="1"/>
</dbReference>
<evidence type="ECO:0000255" key="1">
    <source>
        <dbReference type="HAMAP-Rule" id="MF_01328"/>
    </source>
</evidence>
<evidence type="ECO:0000256" key="2">
    <source>
        <dbReference type="SAM" id="MobiDB-lite"/>
    </source>
</evidence>
<evidence type="ECO:0000305" key="3"/>
<organism>
    <name type="scientific">Mycobacterium leprae (strain TN)</name>
    <dbReference type="NCBI Taxonomy" id="272631"/>
    <lineage>
        <taxon>Bacteria</taxon>
        <taxon>Bacillati</taxon>
        <taxon>Actinomycetota</taxon>
        <taxon>Actinomycetes</taxon>
        <taxon>Mycobacteriales</taxon>
        <taxon>Mycobacteriaceae</taxon>
        <taxon>Mycobacterium</taxon>
    </lineage>
</organism>
<protein>
    <recommendedName>
        <fullName evidence="1">Large ribosomal subunit protein uL4</fullName>
    </recommendedName>
    <alternativeName>
        <fullName evidence="3">50S ribosomal protein L4</fullName>
    </alternativeName>
</protein>
<accession>O32982</accession>
<proteinExistence type="inferred from homology"/>
<sequence>MAAKVENGSNIRKIDVKTPDGKVDGTIELPAELFDAPANIALMHQVVTAQRAAARQGTHSTKTRGDVSGGGRKPYRQKGTGRARQGSMRAPQFTGGGIVHGPKLRDYSQRTPKKMIAAALRGALSDRARNGRIHAVTELVVGKTPSTKSAKEFLGTLTDRKQVLVVIGRSDETGAKSVRNLPGVHLLSPDQLNTYDVLRADDLVFSVEALNSYIAAQQAAGTSTPEKVSA</sequence>
<feature type="chain" id="PRO_0000129240" description="Large ribosomal subunit protein uL4">
    <location>
        <begin position="1"/>
        <end position="230"/>
    </location>
</feature>
<feature type="region of interest" description="Disordered" evidence="2">
    <location>
        <begin position="51"/>
        <end position="105"/>
    </location>
</feature>